<reference key="1">
    <citation type="journal article" date="1995" name="Virus Res.">
        <title>Genetic variation in Tula hantaviruses: sequence analysis of the S and M segments of strains from Central Europe.</title>
        <authorList>
            <person name="Plyusnin A."/>
            <person name="Cheng Y."/>
            <person name="Vapalahti O."/>
            <person name="Pejcoch M."/>
            <person name="Unar J."/>
            <person name="Jelinkova Z."/>
            <person name="Lehvaeslaiho H."/>
            <person name="Lundkvist A."/>
            <person name="Vaheri A."/>
        </authorList>
    </citation>
    <scope>NUCLEOTIDE SEQUENCE [GENOMIC RNA]</scope>
    <source>
        <strain>Isolate Tula/Moravia/5302Ma/94</strain>
    </source>
</reference>
<reference key="2">
    <citation type="journal article" date="1996" name="J. Gen. Virol.">
        <title>Isolation and characterization of Tula virus, a distinct serotype in the genus Hantavirus, family Bunyaviridae.</title>
        <authorList>
            <person name="Vapalahti O."/>
            <person name="Lundkvist A."/>
            <person name="Kukkonen S.K."/>
            <person name="Cheng Y."/>
            <person name="Gilljam M."/>
            <person name="Kanerva M."/>
            <person name="Manni T."/>
            <person name="Pejcoch M."/>
            <person name="Niemimaa J."/>
            <person name="Kaikusalo A."/>
            <person name="Henttonen H."/>
            <person name="Vaheri A."/>
            <person name="Plyusnin A."/>
        </authorList>
    </citation>
    <scope>NUCLEOTIDE SEQUENCE [GENOMIC RNA]</scope>
    <source>
        <strain>Isolate Tula/Moravia/5302v/95</strain>
    </source>
</reference>
<reference key="3">
    <citation type="journal article" date="2003" name="J. Virol.">
        <title>Mapping of the regions involved in homotypic interactions of Tula hantavirus N protein.</title>
        <authorList>
            <person name="Kaukinen P."/>
            <person name="Vaheri A."/>
            <person name="Plyusnin A."/>
        </authorList>
    </citation>
    <scope>SUBUNIT</scope>
</reference>
<reference key="4">
    <citation type="journal article" date="2003" name="Virus Res.">
        <title>Non-covalent interaction between nucleocapsid protein of Tula hantavirus and small ubiquitin-related modifier-1, SUMO-1.</title>
        <authorList>
            <person name="Kaukinen P."/>
            <person name="Vaheri A."/>
            <person name="Plyusnin A."/>
        </authorList>
    </citation>
    <scope>INTERACTION WITH HOST SUMO1</scope>
    <scope>SUBCELLULAR LOCATION</scope>
</reference>
<reference key="5">
    <citation type="journal article" date="2004" name="J. Virol.">
        <title>Oligomerization of Hantavirus N protein: C-terminal alpha-helices interact to form a shared hydrophobic space.</title>
        <authorList>
            <person name="Kaukinen P."/>
            <person name="Kumar V."/>
            <person name="Tulimaeki K."/>
            <person name="Engelhardt P."/>
            <person name="Vaheri A."/>
            <person name="Plyusnin A."/>
        </authorList>
    </citation>
    <scope>SUBUNIT</scope>
</reference>
<reference key="6">
    <citation type="journal article" date="2006" name="J. Virol.">
        <title>Oligomerization of hantavirus nucleocapsid protein: analysis of the N-terminal coiled-coil domain.</title>
        <authorList>
            <person name="Alminaite A."/>
            <person name="Halttunen V."/>
            <person name="Kumar V."/>
            <person name="Vaheri A."/>
            <person name="Holm L."/>
            <person name="Plyusnin A."/>
        </authorList>
    </citation>
    <scope>SUBUNIT</scope>
    <scope>DOMAIN</scope>
</reference>
<reference key="7">
    <citation type="journal article" date="2008" name="J. Gen. Virol.">
        <title>Oligomerization of hantaviral nucleocapsid protein: charged residues in the N-terminal coiled-coil domain contribute to intermolecular interactions.</title>
        <authorList>
            <person name="Alminaite A."/>
            <person name="Backstroem V."/>
            <person name="Vaheri A."/>
            <person name="Plyusnin A."/>
        </authorList>
    </citation>
    <scope>DOMAIN</scope>
    <scope>COILED COIL</scope>
    <scope>SUBUNIT</scope>
</reference>
<reference key="8">
    <citation type="journal article" date="2010" name="Virus Res.">
        <title>Interaction between hantaviral nucleocapsid protein and the cytoplasmic tail of surface glycoprotein Gn.</title>
        <authorList>
            <person name="Wang H."/>
            <person name="Alminaite A."/>
            <person name="Vaheri A."/>
            <person name="Plyusnin A."/>
        </authorList>
    </citation>
    <scope>INTERACTION WITH GLYCOPROTEIN N</scope>
    <scope>DOMAIN</scope>
    <source>
        <strain>Moravia</strain>
    </source>
</reference>
<reference key="9">
    <citation type="journal article" date="2021" name="Viruses">
        <title>Interactions of Viral Proteins from Pathogenic and Low or Non-Pathogenic Orthohantaviruses with Human Type I Interferon Signaling.</title>
        <authorList>
            <person name="Gallo G."/>
            <person name="Caignard G."/>
            <person name="Badonnel K."/>
            <person name="Chevreux G."/>
            <person name="Terrier S."/>
            <person name="Szemiel A."/>
            <person name="Roman-Sosa G."/>
            <person name="Binder F."/>
            <person name="Gu Q."/>
            <person name="Da Silva Filipe A."/>
            <person name="Ulrich R.G."/>
            <person name="Kohl A."/>
            <person name="Vitour D."/>
            <person name="Tordo N."/>
            <person name="Ermonval M."/>
        </authorList>
    </citation>
    <scope>FUNCTION</scope>
</reference>
<evidence type="ECO:0000250" key="1">
    <source>
        <dbReference type="UniProtKB" id="O36307"/>
    </source>
</evidence>
<evidence type="ECO:0000250" key="2">
    <source>
        <dbReference type="UniProtKB" id="P05133"/>
    </source>
</evidence>
<evidence type="ECO:0000250" key="3">
    <source>
        <dbReference type="UniProtKB" id="P27313"/>
    </source>
</evidence>
<evidence type="ECO:0000250" key="4">
    <source>
        <dbReference type="UniProtKB" id="Q89462"/>
    </source>
</evidence>
<evidence type="ECO:0000269" key="5">
    <source>
    </source>
</evidence>
<evidence type="ECO:0000269" key="6">
    <source>
    </source>
</evidence>
<evidence type="ECO:0000269" key="7">
    <source>
    </source>
</evidence>
<evidence type="ECO:0000269" key="8">
    <source>
    </source>
</evidence>
<evidence type="ECO:0000269" key="9">
    <source>
    </source>
</evidence>
<evidence type="ECO:0000269" key="10">
    <source>
    </source>
</evidence>
<evidence type="ECO:0000269" key="11">
    <source>
    </source>
</evidence>
<evidence type="ECO:0000305" key="12"/>
<evidence type="ECO:0000305" key="13">
    <source>
    </source>
</evidence>
<evidence type="ECO:0000305" key="14">
    <source>
    </source>
</evidence>
<accession>Q88918</accession>
<gene>
    <name type="primary">N</name>
</gene>
<name>NCAP_TULV</name>
<feature type="chain" id="PRO_0000455188" description="Nucleoprotein">
    <location>
        <begin position="1"/>
        <end position="429"/>
    </location>
</feature>
<feature type="region of interest" description="Viral panhandle binding" evidence="4">
    <location>
        <begin position="1"/>
        <end position="175"/>
    </location>
</feature>
<feature type="region of interest" description="Chaperone activity" evidence="4">
    <location>
        <begin position="1"/>
        <end position="100"/>
    </location>
</feature>
<feature type="region of interest" description="Homomultimerization" evidence="6 9 13">
    <location>
        <begin position="1"/>
        <end position="79"/>
    </location>
</feature>
<feature type="region of interest" description="RdRP binding" evidence="4">
    <location>
        <begin position="1"/>
        <end position="50"/>
    </location>
</feature>
<feature type="region of interest" description="Interaction with glycoprotein N" evidence="10">
    <location>
        <begin position="80"/>
        <end position="248"/>
    </location>
</feature>
<feature type="region of interest" description="Homomultimerization" evidence="2">
    <location>
        <begin position="100"/>
        <end position="125"/>
    </location>
</feature>
<feature type="region of interest" description="Interaction with host RPS19" evidence="4">
    <location>
        <begin position="150"/>
        <end position="175"/>
    </location>
</feature>
<feature type="region of interest" description="Viral RNA-binding" evidence="2">
    <location>
        <begin position="175"/>
        <end position="217"/>
    </location>
</feature>
<feature type="region of interest" description="Interaction with host UBE2I/UBC9" evidence="2">
    <location>
        <begin position="188"/>
        <end position="191"/>
    </location>
</feature>
<feature type="region of interest" description="Interaction with host DAXX" evidence="3">
    <location>
        <begin position="373"/>
        <end position="429"/>
    </location>
</feature>
<feature type="region of interest" description="Homomultimerization" evidence="6 7 13">
    <location>
        <begin position="373"/>
        <end position="421"/>
    </location>
</feature>
<feature type="coiled-coil region" evidence="14">
    <location>
        <begin position="4"/>
        <end position="71"/>
    </location>
</feature>
<feature type="short sequence motif" description="YxxL" evidence="2">
    <location>
        <begin position="178"/>
        <end position="181"/>
    </location>
</feature>
<feature type="site" description="Important for the endonuclease activity" evidence="4">
    <location>
        <position position="88"/>
    </location>
</feature>
<feature type="site" description="Important for the endonuclease activity" evidence="4">
    <location>
        <position position="103"/>
    </location>
</feature>
<keyword id="KW-0143">Chaperone</keyword>
<keyword id="KW-0175">Coiled coil</keyword>
<keyword id="KW-0255">Endonuclease</keyword>
<keyword id="KW-1035">Host cytoplasm</keyword>
<keyword id="KW-1040">Host Golgi apparatus</keyword>
<keyword id="KW-0378">Hydrolase</keyword>
<keyword id="KW-0540">Nuclease</keyword>
<keyword id="KW-0687">Ribonucleoprotein</keyword>
<keyword id="KW-0694">RNA-binding</keyword>
<keyword id="KW-0543">Viral nucleoprotein</keyword>
<keyword id="KW-0946">Virion</keyword>
<comment type="function">
    <text evidence="1 2 4 11 12">Encapsidates the genome protecting it from nucleases (Probable). The encapsidated genomic RNA is termed the nucleocapsid (NC) and serves as template for transcription and replication (Probable). The nucleocapsid has a left-handed helical structure (By similarity). As a trimer, specifically binds and acts as a chaperone to unwind the panhandle structure formed by the viral RNA (vRNA) termini (By similarity). Involved in the transcription and replication initiation of vRNA by mediating primer annealing (By similarity). Plays a role in cap snatching by sequestering capped RNAs in P bodies for use by the viral RdRp during transcription initiation (By similarity). Substitutes for the cellular cap-binding complex (eIF4F) to preferentially facilitate the translation of capped mRNAs (By similarity). Initiates the translation by specifically binding to the cap and 40S ribosomal subunit (By similarity). Prevents the viral glycoprotein N (Gn) from autophagy-dependent breakdown maybe by blocking autophagosome formation (By similarity). Inhibits host EIF2AK2/PKR dimerization to prevent PKR-induced translational shutdown in cells and thus the activation of the antiviral state (By similarity). Also displays sequence-unspecific DNA endonuclease activity (By similarity). Inhibits the IFN signaling response directed by the dsRNA sensor RIGI (PubMed:33478127).</text>
</comment>
<comment type="subunit">
    <text evidence="2 3 4 5 6 7 8 9 10">Homotrimer (PubMed:15564476, PubMed:16940519). Homomultimer (PubMed:14512541, PubMed:15564476, PubMed:18753226). Homomultimerizes and binds to viral genomic RNA to form the nucleocapsid (By similarity). Interacts with host MAP1LC3B; this interaction participates to the protection of Gn from virus-triggered autophagy (By similarity). Interacts with host SNAP29; this interaction participates to the protection of glycoprotein N from virus-triggered autophagy (By similarity). Interacts (via N-terminus) with host RPS19; this interaction probably mediates the loading of the 40S ribosomal subunit on viral capped mRNA during N-mediated translation initiation (By similarity). Interacts with the viral RdRp (By similarity). Interacts with host SUMO1 (via N-terminus) (PubMed:12606074). Interacts with host DAXX (By similarity). Interacts with the viral glycoprotein N (via C-terminus) (PubMed:20566401). Interacts with the viral glycoprotein C (via C-terminus) (By similarity).</text>
</comment>
<comment type="subcellular location">
    <subcellularLocation>
        <location evidence="12">Virion</location>
    </subcellularLocation>
    <subcellularLocation>
        <location evidence="5">Host cytoplasm</location>
        <location evidence="5">Host perinuclear region</location>
    </subcellularLocation>
    <subcellularLocation>
        <location evidence="2">Host Golgi apparatus</location>
        <location evidence="2">Host cis-Golgi network</location>
    </subcellularLocation>
    <text evidence="12">Internal protein of virus particle.</text>
</comment>
<comment type="domain">
    <text evidence="2 4 8 9">The N-terminus is required for chaperone activity and, in trimeric form, this region likely serves in high affinity vRNA panhandle recognition (By similarity). The N-terminus also contains a coiled coil region, which probably participates in but is insufficient to initiate N trimerization (PubMed:16940519, PubMed:18753226). The YxxL motif is indispensable for the interaction with host MAP1LC3B (By similarity). The central region is involved in specific RNA-binding (By similarity). Has distinct cap- and RNA-binding sites so it can bind simultaneously both the vRNA and mRNA cap (By similarity).</text>
</comment>
<comment type="similarity">
    <text evidence="12">Belongs to the hantavirus nucleocapsid protein family.</text>
</comment>
<protein>
    <recommendedName>
        <fullName>Nucleoprotein</fullName>
        <ecNumber evidence="4">3.1.-.-</ecNumber>
    </recommendedName>
    <alternativeName>
        <fullName>Nucleocapsid protein</fullName>
        <shortName>Protein N</shortName>
    </alternativeName>
</protein>
<proteinExistence type="evidence at protein level"/>
<sequence length="429" mass="48556">MSQLKEIQEEITRHEQQIVIARQKLKDVEKTVEADPDDVNKSTLQSRRAAVSALEDKLADFKRQLADLVSSQKMGEKPVDPTGLEPDDHLKERSSLRYGNVLDVNAIDIDEPSGQTADWFSIGQYITGFALAIILKALYMLSTRGRQTIKENKGTRIRFKDDSSYEEINGIRRPKHLYVSMPTAQSTMKADELTPGRFRTIVCGLFPAQIMYRNIISPVMGVIGFSFFVKDWPEKIEEFLIKPCPFLKKSGPSKEEDFLVSNDAYLLGREKALRESHLAEIDDLIDLAASGDPTPPDSIKSPQAPWVFACRPDRCPPTCIYIAGMAELGAFFSILQDMRNTIMASKTVGTAEEKLKKKSSFYQSYLRRTQSMGIQLDQRIILLFMTEWGSDIVNHFHLGDDMDPELRTLAQSLIDQKVKEISNQEPLKI</sequence>
<organismHost>
    <name type="scientific">Homo sapiens</name>
    <name type="common">Human</name>
    <dbReference type="NCBI Taxonomy" id="9606"/>
</organismHost>
<organismHost>
    <name type="scientific">Microtus arvalis</name>
    <name type="common">Common vole</name>
    <name type="synonym">Field vole</name>
    <dbReference type="NCBI Taxonomy" id="47230"/>
</organismHost>
<organismHost>
    <name type="scientific">Microtus obscurus</name>
    <name type="common">Altai voie</name>
    <dbReference type="NCBI Taxonomy" id="523745"/>
</organismHost>
<dbReference type="EC" id="3.1.-.-" evidence="4"/>
<dbReference type="EMBL" id="Z49915">
    <property type="status" value="NOT_ANNOTATED_CDS"/>
    <property type="molecule type" value="Genomic_RNA"/>
</dbReference>
<dbReference type="EMBL" id="Z69991">
    <property type="protein sequence ID" value="CAA93823.1"/>
    <property type="molecule type" value="Genomic_RNA"/>
</dbReference>
<dbReference type="SMR" id="Q88918"/>
<dbReference type="Proteomes" id="UP000243699">
    <property type="component" value="Genome"/>
</dbReference>
<dbReference type="GO" id="GO:0044177">
    <property type="term" value="C:host cell Golgi apparatus"/>
    <property type="evidence" value="ECO:0007669"/>
    <property type="project" value="UniProtKB-SubCell"/>
</dbReference>
<dbReference type="GO" id="GO:0044220">
    <property type="term" value="C:host cell perinuclear region of cytoplasm"/>
    <property type="evidence" value="ECO:0007669"/>
    <property type="project" value="UniProtKB-SubCell"/>
</dbReference>
<dbReference type="GO" id="GO:1990904">
    <property type="term" value="C:ribonucleoprotein complex"/>
    <property type="evidence" value="ECO:0007669"/>
    <property type="project" value="UniProtKB-KW"/>
</dbReference>
<dbReference type="GO" id="GO:0019013">
    <property type="term" value="C:viral nucleocapsid"/>
    <property type="evidence" value="ECO:0007669"/>
    <property type="project" value="UniProtKB-KW"/>
</dbReference>
<dbReference type="GO" id="GO:0004519">
    <property type="term" value="F:endonuclease activity"/>
    <property type="evidence" value="ECO:0007669"/>
    <property type="project" value="UniProtKB-KW"/>
</dbReference>
<dbReference type="GO" id="GO:0003723">
    <property type="term" value="F:RNA binding"/>
    <property type="evidence" value="ECO:0007669"/>
    <property type="project" value="UniProtKB-KW"/>
</dbReference>
<dbReference type="Gene3D" id="1.20.58.90">
    <property type="match status" value="1"/>
</dbReference>
<dbReference type="InterPro" id="IPR002214">
    <property type="entry name" value="Hanta_nucleocap"/>
</dbReference>
<dbReference type="Pfam" id="PF00846">
    <property type="entry name" value="Hanta_nucleocap"/>
    <property type="match status" value="1"/>
</dbReference>
<dbReference type="PIRSF" id="PIRSF003949">
    <property type="entry name" value="N_HantaV"/>
    <property type="match status" value="1"/>
</dbReference>
<organism>
    <name type="scientific">Tula orthohantavirus</name>
    <name type="common">TULV</name>
    <name type="synonym">Tula virus</name>
    <dbReference type="NCBI Taxonomy" id="3052503"/>
    <lineage>
        <taxon>Viruses</taxon>
        <taxon>Riboviria</taxon>
        <taxon>Orthornavirae</taxon>
        <taxon>Negarnaviricota</taxon>
        <taxon>Polyploviricotina</taxon>
        <taxon>Ellioviricetes</taxon>
        <taxon>Bunyavirales</taxon>
        <taxon>Hantaviridae</taxon>
        <taxon>Mammantavirinae</taxon>
        <taxon>Orthohantavirus</taxon>
    </lineage>
</organism>